<sequence>MKILITGFDPFGGEAINPALEAIKKLPATIHGAEIKCIEVPTVFQKSADVLQQHIESFQPDAVLCIGQAGGRTGLTPERVAINQDDARIPDNEGNQPIDTPIRADGKAAYFSTLPIKAMVAAIHQAGLPASVSNTAGTFVCNHLMYQALYLVDKYCPNAKAGFMHIPFMMEQVVDKPNTAAMNLDDITRGIEAAIFAIVDFKDRSDLKRVGGATH</sequence>
<accession>Q1J7Y1</accession>
<proteinExistence type="inferred from homology"/>
<protein>
    <recommendedName>
        <fullName evidence="1">Pyrrolidone-carboxylate peptidase</fullName>
        <ecNumber evidence="1">3.4.19.3</ecNumber>
    </recommendedName>
    <alternativeName>
        <fullName evidence="1">5-oxoprolyl-peptidase</fullName>
    </alternativeName>
    <alternativeName>
        <fullName evidence="1">Pyroglutamyl-peptidase I</fullName>
        <shortName evidence="1">PGP-I</shortName>
        <shortName evidence="1">Pyrase</shortName>
    </alternativeName>
</protein>
<evidence type="ECO:0000255" key="1">
    <source>
        <dbReference type="HAMAP-Rule" id="MF_00417"/>
    </source>
</evidence>
<dbReference type="EC" id="3.4.19.3" evidence="1"/>
<dbReference type="EMBL" id="CP000262">
    <property type="protein sequence ID" value="ABF37380.1"/>
    <property type="molecule type" value="Genomic_DNA"/>
</dbReference>
<dbReference type="SMR" id="Q1J7Y1"/>
<dbReference type="MEROPS" id="C15.001"/>
<dbReference type="KEGG" id="spi:MGAS10750_Spy0430"/>
<dbReference type="HOGENOM" id="CLU_043960_4_0_9"/>
<dbReference type="Proteomes" id="UP000002434">
    <property type="component" value="Chromosome"/>
</dbReference>
<dbReference type="GO" id="GO:0005829">
    <property type="term" value="C:cytosol"/>
    <property type="evidence" value="ECO:0007669"/>
    <property type="project" value="InterPro"/>
</dbReference>
<dbReference type="GO" id="GO:0016920">
    <property type="term" value="F:pyroglutamyl-peptidase activity"/>
    <property type="evidence" value="ECO:0007669"/>
    <property type="project" value="UniProtKB-UniRule"/>
</dbReference>
<dbReference type="GO" id="GO:0006508">
    <property type="term" value="P:proteolysis"/>
    <property type="evidence" value="ECO:0007669"/>
    <property type="project" value="UniProtKB-KW"/>
</dbReference>
<dbReference type="CDD" id="cd00501">
    <property type="entry name" value="Peptidase_C15"/>
    <property type="match status" value="1"/>
</dbReference>
<dbReference type="FunFam" id="3.40.630.20:FF:000001">
    <property type="entry name" value="Pyrrolidone-carboxylate peptidase"/>
    <property type="match status" value="1"/>
</dbReference>
<dbReference type="Gene3D" id="3.40.630.20">
    <property type="entry name" value="Peptidase C15, pyroglutamyl peptidase I-like"/>
    <property type="match status" value="1"/>
</dbReference>
<dbReference type="HAMAP" id="MF_00417">
    <property type="entry name" value="Pyrrolid_peptidase"/>
    <property type="match status" value="1"/>
</dbReference>
<dbReference type="InterPro" id="IPR000816">
    <property type="entry name" value="Peptidase_C15"/>
</dbReference>
<dbReference type="InterPro" id="IPR016125">
    <property type="entry name" value="Peptidase_C15-like"/>
</dbReference>
<dbReference type="InterPro" id="IPR036440">
    <property type="entry name" value="Peptidase_C15-like_sf"/>
</dbReference>
<dbReference type="InterPro" id="IPR029762">
    <property type="entry name" value="PGP-I_bact-type"/>
</dbReference>
<dbReference type="InterPro" id="IPR033694">
    <property type="entry name" value="PGPEP1_Cys_AS"/>
</dbReference>
<dbReference type="InterPro" id="IPR033693">
    <property type="entry name" value="PGPEP1_Glu_AS"/>
</dbReference>
<dbReference type="NCBIfam" id="NF009676">
    <property type="entry name" value="PRK13197.1"/>
    <property type="match status" value="1"/>
</dbReference>
<dbReference type="NCBIfam" id="TIGR00504">
    <property type="entry name" value="pyro_pdase"/>
    <property type="match status" value="1"/>
</dbReference>
<dbReference type="PANTHER" id="PTHR23402">
    <property type="entry name" value="PROTEASE FAMILY C15 PYROGLUTAMYL-PEPTIDASE I-RELATED"/>
    <property type="match status" value="1"/>
</dbReference>
<dbReference type="PANTHER" id="PTHR23402:SF1">
    <property type="entry name" value="PYROGLUTAMYL-PEPTIDASE I"/>
    <property type="match status" value="1"/>
</dbReference>
<dbReference type="Pfam" id="PF01470">
    <property type="entry name" value="Peptidase_C15"/>
    <property type="match status" value="1"/>
</dbReference>
<dbReference type="PIRSF" id="PIRSF015592">
    <property type="entry name" value="Prld-crbxl_pptds"/>
    <property type="match status" value="1"/>
</dbReference>
<dbReference type="PRINTS" id="PR00706">
    <property type="entry name" value="PYROGLUPTASE"/>
</dbReference>
<dbReference type="SUPFAM" id="SSF53182">
    <property type="entry name" value="Pyrrolidone carboxyl peptidase (pyroglutamate aminopeptidase)"/>
    <property type="match status" value="1"/>
</dbReference>
<dbReference type="PROSITE" id="PS01334">
    <property type="entry name" value="PYRASE_CYS"/>
    <property type="match status" value="1"/>
</dbReference>
<dbReference type="PROSITE" id="PS01333">
    <property type="entry name" value="PYRASE_GLU"/>
    <property type="match status" value="1"/>
</dbReference>
<name>PCP_STRPF</name>
<organism>
    <name type="scientific">Streptococcus pyogenes serotype M4 (strain MGAS10750)</name>
    <dbReference type="NCBI Taxonomy" id="370554"/>
    <lineage>
        <taxon>Bacteria</taxon>
        <taxon>Bacillati</taxon>
        <taxon>Bacillota</taxon>
        <taxon>Bacilli</taxon>
        <taxon>Lactobacillales</taxon>
        <taxon>Streptococcaceae</taxon>
        <taxon>Streptococcus</taxon>
    </lineage>
</organism>
<feature type="chain" id="PRO_1000050147" description="Pyrrolidone-carboxylate peptidase">
    <location>
        <begin position="1"/>
        <end position="215"/>
    </location>
</feature>
<feature type="active site" evidence="1">
    <location>
        <position position="78"/>
    </location>
</feature>
<feature type="active site" evidence="1">
    <location>
        <position position="141"/>
    </location>
</feature>
<feature type="active site" evidence="1">
    <location>
        <position position="165"/>
    </location>
</feature>
<comment type="function">
    <text evidence="1">Removes 5-oxoproline from various penultimate amino acid residues except L-proline.</text>
</comment>
<comment type="catalytic activity">
    <reaction evidence="1">
        <text>Release of an N-terminal pyroglutamyl group from a polypeptide, the second amino acid generally not being Pro.</text>
        <dbReference type="EC" id="3.4.19.3"/>
    </reaction>
</comment>
<comment type="subunit">
    <text evidence="1">Homotetramer.</text>
</comment>
<comment type="subcellular location">
    <subcellularLocation>
        <location evidence="1">Cytoplasm</location>
    </subcellularLocation>
</comment>
<comment type="similarity">
    <text evidence="1">Belongs to the peptidase C15 family.</text>
</comment>
<keyword id="KW-0963">Cytoplasm</keyword>
<keyword id="KW-0378">Hydrolase</keyword>
<keyword id="KW-0645">Protease</keyword>
<keyword id="KW-0788">Thiol protease</keyword>
<gene>
    <name evidence="1" type="primary">pcp</name>
    <name type="ordered locus">MGAS10750_Spy0430</name>
</gene>
<reference key="1">
    <citation type="journal article" date="2006" name="Proc. Natl. Acad. Sci. U.S.A.">
        <title>Molecular genetic anatomy of inter- and intraserotype variation in the human bacterial pathogen group A Streptococcus.</title>
        <authorList>
            <person name="Beres S.B."/>
            <person name="Richter E.W."/>
            <person name="Nagiec M.J."/>
            <person name="Sumby P."/>
            <person name="Porcella S.F."/>
            <person name="DeLeo F.R."/>
            <person name="Musser J.M."/>
        </authorList>
    </citation>
    <scope>NUCLEOTIDE SEQUENCE [LARGE SCALE GENOMIC DNA]</scope>
    <source>
        <strain>MGAS10750</strain>
    </source>
</reference>